<gene>
    <name evidence="1" type="primary">ruvB</name>
    <name type="ordered locus">CT1630</name>
</gene>
<keyword id="KW-0067">ATP-binding</keyword>
<keyword id="KW-0963">Cytoplasm</keyword>
<keyword id="KW-0227">DNA damage</keyword>
<keyword id="KW-0233">DNA recombination</keyword>
<keyword id="KW-0234">DNA repair</keyword>
<keyword id="KW-0238">DNA-binding</keyword>
<keyword id="KW-0378">Hydrolase</keyword>
<keyword id="KW-0547">Nucleotide-binding</keyword>
<keyword id="KW-1185">Reference proteome</keyword>
<proteinExistence type="inferred from homology"/>
<protein>
    <recommendedName>
        <fullName evidence="1">Holliday junction branch migration complex subunit RuvB</fullName>
        <ecNumber evidence="1">3.6.4.-</ecNumber>
    </recommendedName>
</protein>
<reference key="1">
    <citation type="journal article" date="2002" name="Proc. Natl. Acad. Sci. U.S.A.">
        <title>The complete genome sequence of Chlorobium tepidum TLS, a photosynthetic, anaerobic, green-sulfur bacterium.</title>
        <authorList>
            <person name="Eisen J.A."/>
            <person name="Nelson K.E."/>
            <person name="Paulsen I.T."/>
            <person name="Heidelberg J.F."/>
            <person name="Wu M."/>
            <person name="Dodson R.J."/>
            <person name="DeBoy R.T."/>
            <person name="Gwinn M.L."/>
            <person name="Nelson W.C."/>
            <person name="Haft D.H."/>
            <person name="Hickey E.K."/>
            <person name="Peterson J.D."/>
            <person name="Durkin A.S."/>
            <person name="Kolonay J.F."/>
            <person name="Yang F."/>
            <person name="Holt I.E."/>
            <person name="Umayam L.A."/>
            <person name="Mason T.M."/>
            <person name="Brenner M."/>
            <person name="Shea T.P."/>
            <person name="Parksey D.S."/>
            <person name="Nierman W.C."/>
            <person name="Feldblyum T.V."/>
            <person name="Hansen C.L."/>
            <person name="Craven M.B."/>
            <person name="Radune D."/>
            <person name="Vamathevan J.J."/>
            <person name="Khouri H.M."/>
            <person name="White O."/>
            <person name="Gruber T.M."/>
            <person name="Ketchum K.A."/>
            <person name="Venter J.C."/>
            <person name="Tettelin H."/>
            <person name="Bryant D.A."/>
            <person name="Fraser C.M."/>
        </authorList>
    </citation>
    <scope>NUCLEOTIDE SEQUENCE [LARGE SCALE GENOMIC DNA]</scope>
    <source>
        <strain>ATCC 49652 / DSM 12025 / NBRC 103806 / TLS</strain>
    </source>
</reference>
<accession>Q8KC00</accession>
<evidence type="ECO:0000255" key="1">
    <source>
        <dbReference type="HAMAP-Rule" id="MF_00016"/>
    </source>
</evidence>
<sequence>MRIEALNTAPDATEARFEEQIRPQKMGDFAGQKKLIDNLKVFITAARKRGEALDHVLLSGPPGLGKTTLAHIIAAEMGGSIKITSGPLIDKAGNLAGLLTSMKKGDILFIDEIHRLAPAVEEYLYSAMEDYRIDILLDSGPASRAVQLKLEPFTLVGATTRAGLLTSPLRARFGINSRLDYYNPELLQSIIIRAAGILNIGIDEDAAMEIARRSRGTPRIANRLLRRARDFAQVAGDASISLAVARRTLESLEIDEGGLDDMDKKILEAIVRKFNGGPVGLASLAVSVGEEQDTIEEVYEPYLIQMGYLSRTPRGRVATRLAMSRFAHPGISSQGSLFDTAEDG</sequence>
<dbReference type="EC" id="3.6.4.-" evidence="1"/>
<dbReference type="EMBL" id="AE006470">
    <property type="protein sequence ID" value="AAM72855.1"/>
    <property type="molecule type" value="Genomic_DNA"/>
</dbReference>
<dbReference type="RefSeq" id="NP_662513.1">
    <property type="nucleotide sequence ID" value="NC_002932.3"/>
</dbReference>
<dbReference type="RefSeq" id="WP_010933294.1">
    <property type="nucleotide sequence ID" value="NC_002932.3"/>
</dbReference>
<dbReference type="SMR" id="Q8KC00"/>
<dbReference type="STRING" id="194439.CT1630"/>
<dbReference type="EnsemblBacteria" id="AAM72855">
    <property type="protein sequence ID" value="AAM72855"/>
    <property type="gene ID" value="CT1630"/>
</dbReference>
<dbReference type="KEGG" id="cte:CT1630"/>
<dbReference type="PATRIC" id="fig|194439.7.peg.1473"/>
<dbReference type="eggNOG" id="COG2255">
    <property type="taxonomic scope" value="Bacteria"/>
</dbReference>
<dbReference type="HOGENOM" id="CLU_055599_1_0_10"/>
<dbReference type="OrthoDB" id="9804478at2"/>
<dbReference type="Proteomes" id="UP000001007">
    <property type="component" value="Chromosome"/>
</dbReference>
<dbReference type="GO" id="GO:0005737">
    <property type="term" value="C:cytoplasm"/>
    <property type="evidence" value="ECO:0007669"/>
    <property type="project" value="UniProtKB-SubCell"/>
</dbReference>
<dbReference type="GO" id="GO:0048476">
    <property type="term" value="C:Holliday junction resolvase complex"/>
    <property type="evidence" value="ECO:0007669"/>
    <property type="project" value="UniProtKB-UniRule"/>
</dbReference>
<dbReference type="GO" id="GO:0005524">
    <property type="term" value="F:ATP binding"/>
    <property type="evidence" value="ECO:0007669"/>
    <property type="project" value="UniProtKB-UniRule"/>
</dbReference>
<dbReference type="GO" id="GO:0016887">
    <property type="term" value="F:ATP hydrolysis activity"/>
    <property type="evidence" value="ECO:0007669"/>
    <property type="project" value="InterPro"/>
</dbReference>
<dbReference type="GO" id="GO:0000400">
    <property type="term" value="F:four-way junction DNA binding"/>
    <property type="evidence" value="ECO:0007669"/>
    <property type="project" value="UniProtKB-UniRule"/>
</dbReference>
<dbReference type="GO" id="GO:0009378">
    <property type="term" value="F:four-way junction helicase activity"/>
    <property type="evidence" value="ECO:0007669"/>
    <property type="project" value="InterPro"/>
</dbReference>
<dbReference type="GO" id="GO:0006310">
    <property type="term" value="P:DNA recombination"/>
    <property type="evidence" value="ECO:0007669"/>
    <property type="project" value="UniProtKB-UniRule"/>
</dbReference>
<dbReference type="GO" id="GO:0006281">
    <property type="term" value="P:DNA repair"/>
    <property type="evidence" value="ECO:0007669"/>
    <property type="project" value="UniProtKB-UniRule"/>
</dbReference>
<dbReference type="CDD" id="cd00009">
    <property type="entry name" value="AAA"/>
    <property type="match status" value="1"/>
</dbReference>
<dbReference type="Gene3D" id="1.10.8.60">
    <property type="match status" value="1"/>
</dbReference>
<dbReference type="Gene3D" id="3.40.50.300">
    <property type="entry name" value="P-loop containing nucleotide triphosphate hydrolases"/>
    <property type="match status" value="1"/>
</dbReference>
<dbReference type="Gene3D" id="1.10.10.10">
    <property type="entry name" value="Winged helix-like DNA-binding domain superfamily/Winged helix DNA-binding domain"/>
    <property type="match status" value="1"/>
</dbReference>
<dbReference type="HAMAP" id="MF_00016">
    <property type="entry name" value="DNA_HJ_migration_RuvB"/>
    <property type="match status" value="1"/>
</dbReference>
<dbReference type="InterPro" id="IPR003593">
    <property type="entry name" value="AAA+_ATPase"/>
</dbReference>
<dbReference type="InterPro" id="IPR041445">
    <property type="entry name" value="AAA_lid_4"/>
</dbReference>
<dbReference type="InterPro" id="IPR004605">
    <property type="entry name" value="DNA_helicase_Holl-junc_RuvB"/>
</dbReference>
<dbReference type="InterPro" id="IPR027417">
    <property type="entry name" value="P-loop_NTPase"/>
</dbReference>
<dbReference type="InterPro" id="IPR008824">
    <property type="entry name" value="RuvB-like_N"/>
</dbReference>
<dbReference type="InterPro" id="IPR008823">
    <property type="entry name" value="RuvB_C"/>
</dbReference>
<dbReference type="InterPro" id="IPR036388">
    <property type="entry name" value="WH-like_DNA-bd_sf"/>
</dbReference>
<dbReference type="InterPro" id="IPR036390">
    <property type="entry name" value="WH_DNA-bd_sf"/>
</dbReference>
<dbReference type="NCBIfam" id="NF000868">
    <property type="entry name" value="PRK00080.1"/>
    <property type="match status" value="1"/>
</dbReference>
<dbReference type="NCBIfam" id="TIGR00635">
    <property type="entry name" value="ruvB"/>
    <property type="match status" value="1"/>
</dbReference>
<dbReference type="PANTHER" id="PTHR42848">
    <property type="match status" value="1"/>
</dbReference>
<dbReference type="PANTHER" id="PTHR42848:SF1">
    <property type="entry name" value="HOLLIDAY JUNCTION BRANCH MIGRATION COMPLEX SUBUNIT RUVB"/>
    <property type="match status" value="1"/>
</dbReference>
<dbReference type="Pfam" id="PF17864">
    <property type="entry name" value="AAA_lid_4"/>
    <property type="match status" value="1"/>
</dbReference>
<dbReference type="Pfam" id="PF05491">
    <property type="entry name" value="RuvB_C"/>
    <property type="match status" value="1"/>
</dbReference>
<dbReference type="Pfam" id="PF05496">
    <property type="entry name" value="RuvB_N"/>
    <property type="match status" value="1"/>
</dbReference>
<dbReference type="SMART" id="SM00382">
    <property type="entry name" value="AAA"/>
    <property type="match status" value="1"/>
</dbReference>
<dbReference type="SUPFAM" id="SSF52540">
    <property type="entry name" value="P-loop containing nucleoside triphosphate hydrolases"/>
    <property type="match status" value="1"/>
</dbReference>
<dbReference type="SUPFAM" id="SSF46785">
    <property type="entry name" value="Winged helix' DNA-binding domain"/>
    <property type="match status" value="1"/>
</dbReference>
<name>RUVB_CHLTE</name>
<comment type="function">
    <text evidence="1">The RuvA-RuvB-RuvC complex processes Holliday junction (HJ) DNA during genetic recombination and DNA repair, while the RuvA-RuvB complex plays an important role in the rescue of blocked DNA replication forks via replication fork reversal (RFR). RuvA specifically binds to HJ cruciform DNA, conferring on it an open structure. The RuvB hexamer acts as an ATP-dependent pump, pulling dsDNA into and through the RuvAB complex. RuvB forms 2 homohexamers on either side of HJ DNA bound by 1 or 2 RuvA tetramers; 4 subunits per hexamer contact DNA at a time. Coordinated motions by a converter formed by DNA-disengaged RuvB subunits stimulates ATP hydrolysis and nucleotide exchange. Immobilization of the converter enables RuvB to convert the ATP-contained energy into a lever motion, pulling 2 nucleotides of DNA out of the RuvA tetramer per ATP hydrolyzed, thus driving DNA branch migration. The RuvB motors rotate together with the DNA substrate, which together with the progressing nucleotide cycle form the mechanistic basis for DNA recombination by continuous HJ branch migration. Branch migration allows RuvC to scan DNA until it finds its consensus sequence, where it cleaves and resolves cruciform DNA.</text>
</comment>
<comment type="catalytic activity">
    <reaction evidence="1">
        <text>ATP + H2O = ADP + phosphate + H(+)</text>
        <dbReference type="Rhea" id="RHEA:13065"/>
        <dbReference type="ChEBI" id="CHEBI:15377"/>
        <dbReference type="ChEBI" id="CHEBI:15378"/>
        <dbReference type="ChEBI" id="CHEBI:30616"/>
        <dbReference type="ChEBI" id="CHEBI:43474"/>
        <dbReference type="ChEBI" id="CHEBI:456216"/>
    </reaction>
</comment>
<comment type="subunit">
    <text evidence="1">Homohexamer. Forms an RuvA(8)-RuvB(12)-Holliday junction (HJ) complex. HJ DNA is sandwiched between 2 RuvA tetramers; dsDNA enters through RuvA and exits via RuvB. An RuvB hexamer assembles on each DNA strand where it exits the tetramer. Each RuvB hexamer is contacted by two RuvA subunits (via domain III) on 2 adjacent RuvB subunits; this complex drives branch migration. In the full resolvosome a probable DNA-RuvA(4)-RuvB(12)-RuvC(2) complex forms which resolves the HJ.</text>
</comment>
<comment type="subcellular location">
    <subcellularLocation>
        <location evidence="1">Cytoplasm</location>
    </subcellularLocation>
</comment>
<comment type="domain">
    <text evidence="1">Has 3 domains, the large (RuvB-L) and small ATPase (RuvB-S) domains and the C-terminal head (RuvB-H) domain. The head domain binds DNA, while the ATPase domains jointly bind ATP, ADP or are empty depending on the state of the subunit in the translocation cycle. During a single DNA translocation step the structure of each domain remains the same, but their relative positions change.</text>
</comment>
<comment type="similarity">
    <text evidence="1">Belongs to the RuvB family.</text>
</comment>
<feature type="chain" id="PRO_0000165516" description="Holliday junction branch migration complex subunit RuvB">
    <location>
        <begin position="1"/>
        <end position="344"/>
    </location>
</feature>
<feature type="region of interest" description="Large ATPase domain (RuvB-L)" evidence="1">
    <location>
        <begin position="1"/>
        <end position="182"/>
    </location>
</feature>
<feature type="region of interest" description="Small ATPAse domain (RuvB-S)" evidence="1">
    <location>
        <begin position="183"/>
        <end position="253"/>
    </location>
</feature>
<feature type="region of interest" description="Head domain (RuvB-H)" evidence="1">
    <location>
        <begin position="256"/>
        <end position="344"/>
    </location>
</feature>
<feature type="binding site" evidence="1">
    <location>
        <position position="21"/>
    </location>
    <ligand>
        <name>ATP</name>
        <dbReference type="ChEBI" id="CHEBI:30616"/>
    </ligand>
</feature>
<feature type="binding site" evidence="1">
    <location>
        <position position="22"/>
    </location>
    <ligand>
        <name>ATP</name>
        <dbReference type="ChEBI" id="CHEBI:30616"/>
    </ligand>
</feature>
<feature type="binding site" evidence="1">
    <location>
        <position position="63"/>
    </location>
    <ligand>
        <name>ATP</name>
        <dbReference type="ChEBI" id="CHEBI:30616"/>
    </ligand>
</feature>
<feature type="binding site" evidence="1">
    <location>
        <position position="66"/>
    </location>
    <ligand>
        <name>ATP</name>
        <dbReference type="ChEBI" id="CHEBI:30616"/>
    </ligand>
</feature>
<feature type="binding site" evidence="1">
    <location>
        <position position="67"/>
    </location>
    <ligand>
        <name>ATP</name>
        <dbReference type="ChEBI" id="CHEBI:30616"/>
    </ligand>
</feature>
<feature type="binding site" evidence="1">
    <location>
        <position position="67"/>
    </location>
    <ligand>
        <name>Mg(2+)</name>
        <dbReference type="ChEBI" id="CHEBI:18420"/>
    </ligand>
</feature>
<feature type="binding site" evidence="1">
    <location>
        <position position="68"/>
    </location>
    <ligand>
        <name>ATP</name>
        <dbReference type="ChEBI" id="CHEBI:30616"/>
    </ligand>
</feature>
<feature type="binding site" evidence="1">
    <location>
        <begin position="129"/>
        <end position="131"/>
    </location>
    <ligand>
        <name>ATP</name>
        <dbReference type="ChEBI" id="CHEBI:30616"/>
    </ligand>
</feature>
<feature type="binding site" evidence="1">
    <location>
        <position position="172"/>
    </location>
    <ligand>
        <name>ATP</name>
        <dbReference type="ChEBI" id="CHEBI:30616"/>
    </ligand>
</feature>
<feature type="binding site" evidence="1">
    <location>
        <position position="182"/>
    </location>
    <ligand>
        <name>ATP</name>
        <dbReference type="ChEBI" id="CHEBI:30616"/>
    </ligand>
</feature>
<feature type="binding site" evidence="1">
    <location>
        <position position="219"/>
    </location>
    <ligand>
        <name>ATP</name>
        <dbReference type="ChEBI" id="CHEBI:30616"/>
    </ligand>
</feature>
<feature type="binding site" evidence="1">
    <location>
        <position position="311"/>
    </location>
    <ligand>
        <name>DNA</name>
        <dbReference type="ChEBI" id="CHEBI:16991"/>
    </ligand>
</feature>
<feature type="binding site" evidence="1">
    <location>
        <position position="316"/>
    </location>
    <ligand>
        <name>DNA</name>
        <dbReference type="ChEBI" id="CHEBI:16991"/>
    </ligand>
</feature>
<organism>
    <name type="scientific">Chlorobaculum tepidum (strain ATCC 49652 / DSM 12025 / NBRC 103806 / TLS)</name>
    <name type="common">Chlorobium tepidum</name>
    <dbReference type="NCBI Taxonomy" id="194439"/>
    <lineage>
        <taxon>Bacteria</taxon>
        <taxon>Pseudomonadati</taxon>
        <taxon>Chlorobiota</taxon>
        <taxon>Chlorobiia</taxon>
        <taxon>Chlorobiales</taxon>
        <taxon>Chlorobiaceae</taxon>
        <taxon>Chlorobaculum</taxon>
    </lineage>
</organism>